<name>RUVB_STAEQ</name>
<keyword id="KW-0067">ATP-binding</keyword>
<keyword id="KW-0963">Cytoplasm</keyword>
<keyword id="KW-0227">DNA damage</keyword>
<keyword id="KW-0233">DNA recombination</keyword>
<keyword id="KW-0234">DNA repair</keyword>
<keyword id="KW-0238">DNA-binding</keyword>
<keyword id="KW-0378">Hydrolase</keyword>
<keyword id="KW-0547">Nucleotide-binding</keyword>
<keyword id="KW-1185">Reference proteome</keyword>
<accession>Q5HNR0</accession>
<organism>
    <name type="scientific">Staphylococcus epidermidis (strain ATCC 35984 / DSM 28319 / BCRC 17069 / CCUG 31568 / BM 3577 / RP62A)</name>
    <dbReference type="NCBI Taxonomy" id="176279"/>
    <lineage>
        <taxon>Bacteria</taxon>
        <taxon>Bacillati</taxon>
        <taxon>Bacillota</taxon>
        <taxon>Bacilli</taxon>
        <taxon>Bacillales</taxon>
        <taxon>Staphylococcaceae</taxon>
        <taxon>Staphylococcus</taxon>
    </lineage>
</organism>
<reference key="1">
    <citation type="journal article" date="2005" name="J. Bacteriol.">
        <title>Insights on evolution of virulence and resistance from the complete genome analysis of an early methicillin-resistant Staphylococcus aureus strain and a biofilm-producing methicillin-resistant Staphylococcus epidermidis strain.</title>
        <authorList>
            <person name="Gill S.R."/>
            <person name="Fouts D.E."/>
            <person name="Archer G.L."/>
            <person name="Mongodin E.F."/>
            <person name="DeBoy R.T."/>
            <person name="Ravel J."/>
            <person name="Paulsen I.T."/>
            <person name="Kolonay J.F."/>
            <person name="Brinkac L.M."/>
            <person name="Beanan M.J."/>
            <person name="Dodson R.J."/>
            <person name="Daugherty S.C."/>
            <person name="Madupu R."/>
            <person name="Angiuoli S.V."/>
            <person name="Durkin A.S."/>
            <person name="Haft D.H."/>
            <person name="Vamathevan J.J."/>
            <person name="Khouri H."/>
            <person name="Utterback T.R."/>
            <person name="Lee C."/>
            <person name="Dimitrov G."/>
            <person name="Jiang L."/>
            <person name="Qin H."/>
            <person name="Weidman J."/>
            <person name="Tran K."/>
            <person name="Kang K.H."/>
            <person name="Hance I.R."/>
            <person name="Nelson K.E."/>
            <person name="Fraser C.M."/>
        </authorList>
    </citation>
    <scope>NUCLEOTIDE SEQUENCE [LARGE SCALE GENOMIC DNA]</scope>
    <source>
        <strain>ATCC 35984 / DSM 28319 / BCRC 17069 / CCUG 31568 / BM 3577 / RP62A</strain>
    </source>
</reference>
<dbReference type="EC" id="3.6.4.-" evidence="1"/>
<dbReference type="EMBL" id="CP000029">
    <property type="protein sequence ID" value="AAW54590.1"/>
    <property type="molecule type" value="Genomic_DNA"/>
</dbReference>
<dbReference type="RefSeq" id="WP_001830787.1">
    <property type="nucleotide sequence ID" value="NC_002976.3"/>
</dbReference>
<dbReference type="SMR" id="Q5HNR0"/>
<dbReference type="STRING" id="176279.SERP1205"/>
<dbReference type="GeneID" id="50018561"/>
<dbReference type="KEGG" id="ser:SERP1205"/>
<dbReference type="eggNOG" id="COG2255">
    <property type="taxonomic scope" value="Bacteria"/>
</dbReference>
<dbReference type="HOGENOM" id="CLU_055599_1_0_9"/>
<dbReference type="Proteomes" id="UP000000531">
    <property type="component" value="Chromosome"/>
</dbReference>
<dbReference type="GO" id="GO:0005737">
    <property type="term" value="C:cytoplasm"/>
    <property type="evidence" value="ECO:0007669"/>
    <property type="project" value="UniProtKB-SubCell"/>
</dbReference>
<dbReference type="GO" id="GO:0048476">
    <property type="term" value="C:Holliday junction resolvase complex"/>
    <property type="evidence" value="ECO:0007669"/>
    <property type="project" value="UniProtKB-UniRule"/>
</dbReference>
<dbReference type="GO" id="GO:0005524">
    <property type="term" value="F:ATP binding"/>
    <property type="evidence" value="ECO:0007669"/>
    <property type="project" value="UniProtKB-UniRule"/>
</dbReference>
<dbReference type="GO" id="GO:0016887">
    <property type="term" value="F:ATP hydrolysis activity"/>
    <property type="evidence" value="ECO:0007669"/>
    <property type="project" value="InterPro"/>
</dbReference>
<dbReference type="GO" id="GO:0000400">
    <property type="term" value="F:four-way junction DNA binding"/>
    <property type="evidence" value="ECO:0007669"/>
    <property type="project" value="UniProtKB-UniRule"/>
</dbReference>
<dbReference type="GO" id="GO:0009378">
    <property type="term" value="F:four-way junction helicase activity"/>
    <property type="evidence" value="ECO:0007669"/>
    <property type="project" value="InterPro"/>
</dbReference>
<dbReference type="GO" id="GO:0006310">
    <property type="term" value="P:DNA recombination"/>
    <property type="evidence" value="ECO:0007669"/>
    <property type="project" value="UniProtKB-UniRule"/>
</dbReference>
<dbReference type="GO" id="GO:0006281">
    <property type="term" value="P:DNA repair"/>
    <property type="evidence" value="ECO:0007669"/>
    <property type="project" value="UniProtKB-UniRule"/>
</dbReference>
<dbReference type="CDD" id="cd00009">
    <property type="entry name" value="AAA"/>
    <property type="match status" value="1"/>
</dbReference>
<dbReference type="Gene3D" id="1.10.8.60">
    <property type="match status" value="1"/>
</dbReference>
<dbReference type="Gene3D" id="3.40.50.300">
    <property type="entry name" value="P-loop containing nucleotide triphosphate hydrolases"/>
    <property type="match status" value="1"/>
</dbReference>
<dbReference type="Gene3D" id="1.10.10.10">
    <property type="entry name" value="Winged helix-like DNA-binding domain superfamily/Winged helix DNA-binding domain"/>
    <property type="match status" value="1"/>
</dbReference>
<dbReference type="HAMAP" id="MF_00016">
    <property type="entry name" value="DNA_HJ_migration_RuvB"/>
    <property type="match status" value="1"/>
</dbReference>
<dbReference type="InterPro" id="IPR003593">
    <property type="entry name" value="AAA+_ATPase"/>
</dbReference>
<dbReference type="InterPro" id="IPR041445">
    <property type="entry name" value="AAA_lid_4"/>
</dbReference>
<dbReference type="InterPro" id="IPR004605">
    <property type="entry name" value="DNA_helicase_Holl-junc_RuvB"/>
</dbReference>
<dbReference type="InterPro" id="IPR027417">
    <property type="entry name" value="P-loop_NTPase"/>
</dbReference>
<dbReference type="InterPro" id="IPR008824">
    <property type="entry name" value="RuvB-like_N"/>
</dbReference>
<dbReference type="InterPro" id="IPR008823">
    <property type="entry name" value="RuvB_C"/>
</dbReference>
<dbReference type="InterPro" id="IPR036388">
    <property type="entry name" value="WH-like_DNA-bd_sf"/>
</dbReference>
<dbReference type="InterPro" id="IPR036390">
    <property type="entry name" value="WH_DNA-bd_sf"/>
</dbReference>
<dbReference type="NCBIfam" id="NF000868">
    <property type="entry name" value="PRK00080.1"/>
    <property type="match status" value="1"/>
</dbReference>
<dbReference type="NCBIfam" id="TIGR00635">
    <property type="entry name" value="ruvB"/>
    <property type="match status" value="1"/>
</dbReference>
<dbReference type="PANTHER" id="PTHR42848">
    <property type="match status" value="1"/>
</dbReference>
<dbReference type="PANTHER" id="PTHR42848:SF1">
    <property type="entry name" value="HOLLIDAY JUNCTION BRANCH MIGRATION COMPLEX SUBUNIT RUVB"/>
    <property type="match status" value="1"/>
</dbReference>
<dbReference type="Pfam" id="PF17864">
    <property type="entry name" value="AAA_lid_4"/>
    <property type="match status" value="1"/>
</dbReference>
<dbReference type="Pfam" id="PF05491">
    <property type="entry name" value="RuvB_C"/>
    <property type="match status" value="1"/>
</dbReference>
<dbReference type="Pfam" id="PF05496">
    <property type="entry name" value="RuvB_N"/>
    <property type="match status" value="1"/>
</dbReference>
<dbReference type="SMART" id="SM00382">
    <property type="entry name" value="AAA"/>
    <property type="match status" value="1"/>
</dbReference>
<dbReference type="SUPFAM" id="SSF52540">
    <property type="entry name" value="P-loop containing nucleoside triphosphate hydrolases"/>
    <property type="match status" value="1"/>
</dbReference>
<dbReference type="SUPFAM" id="SSF46785">
    <property type="entry name" value="Winged helix' DNA-binding domain"/>
    <property type="match status" value="1"/>
</dbReference>
<evidence type="ECO:0000255" key="1">
    <source>
        <dbReference type="HAMAP-Rule" id="MF_00016"/>
    </source>
</evidence>
<sequence length="334" mass="37856">MDKRMVDQEFHNEDTDLELSLRPTQLKQYIGQSSIKSNLEVFIKAAKLRQEPLDHVLLFGPPGLGKTTLSNIIANEMEVNIRTISGPSLERPGDLAAILSGLQPGDVLFIDEIHRLSSVVEEVLYPAMEDFFLDIIIGKGDEARSIRIDLPPFTLVGATTRAGSLTGPLRDRFGVHLRLEYYNENDLKEIITRTAEVLGTDIDKESALELARRSRGTPRIANRLLKRVRDFQQVNEDDQIYIETTKRALQLLQVDQHGLDYIDHKMMNCIINQYNGGPVGLDTIAVSIGEERVTIEDVYEPFLIQRGFLERTPRGRKATALAYEHFNTTNEKRE</sequence>
<protein>
    <recommendedName>
        <fullName evidence="1">Holliday junction branch migration complex subunit RuvB</fullName>
        <ecNumber evidence="1">3.6.4.-</ecNumber>
    </recommendedName>
</protein>
<proteinExistence type="inferred from homology"/>
<feature type="chain" id="PRO_0000165601" description="Holliday junction branch migration complex subunit RuvB">
    <location>
        <begin position="1"/>
        <end position="334"/>
    </location>
</feature>
<feature type="region of interest" description="Large ATPase domain (RuvB-L)" evidence="1">
    <location>
        <begin position="1"/>
        <end position="182"/>
    </location>
</feature>
<feature type="region of interest" description="Small ATPAse domain (RuvB-S)" evidence="1">
    <location>
        <begin position="183"/>
        <end position="253"/>
    </location>
</feature>
<feature type="region of interest" description="Head domain (RuvB-H)" evidence="1">
    <location>
        <begin position="256"/>
        <end position="334"/>
    </location>
</feature>
<feature type="binding site" evidence="1">
    <location>
        <position position="21"/>
    </location>
    <ligand>
        <name>ATP</name>
        <dbReference type="ChEBI" id="CHEBI:30616"/>
    </ligand>
</feature>
<feature type="binding site" evidence="1">
    <location>
        <position position="22"/>
    </location>
    <ligand>
        <name>ATP</name>
        <dbReference type="ChEBI" id="CHEBI:30616"/>
    </ligand>
</feature>
<feature type="binding site" evidence="1">
    <location>
        <position position="63"/>
    </location>
    <ligand>
        <name>ATP</name>
        <dbReference type="ChEBI" id="CHEBI:30616"/>
    </ligand>
</feature>
<feature type="binding site" evidence="1">
    <location>
        <position position="66"/>
    </location>
    <ligand>
        <name>ATP</name>
        <dbReference type="ChEBI" id="CHEBI:30616"/>
    </ligand>
</feature>
<feature type="binding site" evidence="1">
    <location>
        <position position="67"/>
    </location>
    <ligand>
        <name>ATP</name>
        <dbReference type="ChEBI" id="CHEBI:30616"/>
    </ligand>
</feature>
<feature type="binding site" evidence="1">
    <location>
        <position position="67"/>
    </location>
    <ligand>
        <name>Mg(2+)</name>
        <dbReference type="ChEBI" id="CHEBI:18420"/>
    </ligand>
</feature>
<feature type="binding site" evidence="1">
    <location>
        <position position="68"/>
    </location>
    <ligand>
        <name>ATP</name>
        <dbReference type="ChEBI" id="CHEBI:30616"/>
    </ligand>
</feature>
<feature type="binding site" evidence="1">
    <location>
        <begin position="129"/>
        <end position="131"/>
    </location>
    <ligand>
        <name>ATP</name>
        <dbReference type="ChEBI" id="CHEBI:30616"/>
    </ligand>
</feature>
<feature type="binding site" evidence="1">
    <location>
        <position position="172"/>
    </location>
    <ligand>
        <name>ATP</name>
        <dbReference type="ChEBI" id="CHEBI:30616"/>
    </ligand>
</feature>
<feature type="binding site" evidence="1">
    <location>
        <position position="182"/>
    </location>
    <ligand>
        <name>ATP</name>
        <dbReference type="ChEBI" id="CHEBI:30616"/>
    </ligand>
</feature>
<feature type="binding site" evidence="1">
    <location>
        <position position="219"/>
    </location>
    <ligand>
        <name>ATP</name>
        <dbReference type="ChEBI" id="CHEBI:30616"/>
    </ligand>
</feature>
<feature type="binding site" evidence="1">
    <location>
        <position position="292"/>
    </location>
    <ligand>
        <name>DNA</name>
        <dbReference type="ChEBI" id="CHEBI:16991"/>
    </ligand>
</feature>
<feature type="binding site" evidence="1">
    <location>
        <position position="311"/>
    </location>
    <ligand>
        <name>DNA</name>
        <dbReference type="ChEBI" id="CHEBI:16991"/>
    </ligand>
</feature>
<feature type="binding site" evidence="1">
    <location>
        <position position="316"/>
    </location>
    <ligand>
        <name>DNA</name>
        <dbReference type="ChEBI" id="CHEBI:16991"/>
    </ligand>
</feature>
<gene>
    <name evidence="1" type="primary">ruvB</name>
    <name type="ordered locus">SERP1205</name>
</gene>
<comment type="function">
    <text evidence="1">The RuvA-RuvB-RuvC complex processes Holliday junction (HJ) DNA during genetic recombination and DNA repair, while the RuvA-RuvB complex plays an important role in the rescue of blocked DNA replication forks via replication fork reversal (RFR). RuvA specifically binds to HJ cruciform DNA, conferring on it an open structure. The RuvB hexamer acts as an ATP-dependent pump, pulling dsDNA into and through the RuvAB complex. RuvB forms 2 homohexamers on either side of HJ DNA bound by 1 or 2 RuvA tetramers; 4 subunits per hexamer contact DNA at a time. Coordinated motions by a converter formed by DNA-disengaged RuvB subunits stimulates ATP hydrolysis and nucleotide exchange. Immobilization of the converter enables RuvB to convert the ATP-contained energy into a lever motion, pulling 2 nucleotides of DNA out of the RuvA tetramer per ATP hydrolyzed, thus driving DNA branch migration. The RuvB motors rotate together with the DNA substrate, which together with the progressing nucleotide cycle form the mechanistic basis for DNA recombination by continuous HJ branch migration. Branch migration allows RuvC to scan DNA until it finds its consensus sequence, where it cleaves and resolves cruciform DNA.</text>
</comment>
<comment type="catalytic activity">
    <reaction evidence="1">
        <text>ATP + H2O = ADP + phosphate + H(+)</text>
        <dbReference type="Rhea" id="RHEA:13065"/>
        <dbReference type="ChEBI" id="CHEBI:15377"/>
        <dbReference type="ChEBI" id="CHEBI:15378"/>
        <dbReference type="ChEBI" id="CHEBI:30616"/>
        <dbReference type="ChEBI" id="CHEBI:43474"/>
        <dbReference type="ChEBI" id="CHEBI:456216"/>
    </reaction>
</comment>
<comment type="subunit">
    <text evidence="1">Homohexamer. Forms an RuvA(8)-RuvB(12)-Holliday junction (HJ) complex. HJ DNA is sandwiched between 2 RuvA tetramers; dsDNA enters through RuvA and exits via RuvB. An RuvB hexamer assembles on each DNA strand where it exits the tetramer. Each RuvB hexamer is contacted by two RuvA subunits (via domain III) on 2 adjacent RuvB subunits; this complex drives branch migration. In the full resolvosome a probable DNA-RuvA(4)-RuvB(12)-RuvC(2) complex forms which resolves the HJ.</text>
</comment>
<comment type="subcellular location">
    <subcellularLocation>
        <location evidence="1">Cytoplasm</location>
    </subcellularLocation>
</comment>
<comment type="domain">
    <text evidence="1">Has 3 domains, the large (RuvB-L) and small ATPase (RuvB-S) domains and the C-terminal head (RuvB-H) domain. The head domain binds DNA, while the ATPase domains jointly bind ATP, ADP or are empty depending on the state of the subunit in the translocation cycle. During a single DNA translocation step the structure of each domain remains the same, but their relative positions change.</text>
</comment>
<comment type="similarity">
    <text evidence="1">Belongs to the RuvB family.</text>
</comment>